<sequence>MAYIDQKHNTFWDDFAIALRDKIVFLNSTWGEIHASAHRFEDLSALAFDEAEEMIYFSDQTHQNGSIFALRRDDSTPIVVQRTGNDSVEGLAYDPLNRNLFWADMRQQKIFFSSVDTLATELPKVLVDLSGEGGQPDGIAVDICRRQLYWTNGNIKSASVERIGLDGKGRQTIISADIDMPRGIVVDQLSDRIFWVDNKVGIFFAIESARLDGSDRQVVVKGKHQDPKHLAINEDAIYWTDRMDKAVWSYPKPTYSQEVTNVTQAEPELAKPFSKEKAYGIVTRTGFYQRLQKDAHCASIVKKVKQQLNTRLNNRTHIRSAEGDRISQLEREHCLNGASFMSRGEFCICPVGFKGARCEISECHNYCVHGTCEISDAGFPKCYCQAEFYGERCEYHKCNGHCLNSGHCSMDKESDAMRCECRPNFGGERCEHNLTEQCAIYCQHPETQLPVSCLDFCEEWSNSNDTATITEYQTAGQCGPAPPVQGPLIIVIVLGLVTTSGLVALTVHGVRLIYKPKRPRIKKTFVVRKQARLNSSSDTPLTNRPLTTEQCEITIENCCNMNICETPCFDPKLVEQTFSSRDRKAPCVKEDKKILIHSMEDNLLS</sequence>
<feature type="signal peptide" evidence="2">
    <location>
        <begin position="1"/>
        <end position="31"/>
    </location>
</feature>
<feature type="chain" id="PRO_0000386571" description="Protein cueball" evidence="2">
    <location>
        <begin position="32"/>
        <end position="605"/>
    </location>
</feature>
<feature type="topological domain" description="Extracellular" evidence="2">
    <location>
        <begin position="32"/>
        <end position="486"/>
    </location>
</feature>
<feature type="transmembrane region" description="Helical" evidence="2">
    <location>
        <begin position="487"/>
        <end position="507"/>
    </location>
</feature>
<feature type="topological domain" description="Cytoplasmic" evidence="2">
    <location>
        <begin position="508"/>
        <end position="605"/>
    </location>
</feature>
<feature type="repeat" description="LDL-receptor class B 1" evidence="2">
    <location>
        <begin position="53"/>
        <end position="97"/>
    </location>
</feature>
<feature type="repeat" description="LDL-receptor class B 2" evidence="2">
    <location>
        <begin position="98"/>
        <end position="145"/>
    </location>
</feature>
<feature type="repeat" description="LDL-receptor class B 3" evidence="2">
    <location>
        <begin position="146"/>
        <end position="190"/>
    </location>
</feature>
<feature type="repeat" description="LDL-receptor class B 4" evidence="2">
    <location>
        <begin position="191"/>
        <end position="236"/>
    </location>
</feature>
<feature type="domain" description="EGF-like 1" evidence="3">
    <location>
        <begin position="322"/>
        <end position="359"/>
    </location>
</feature>
<feature type="domain" description="EGF-like 2" evidence="3">
    <location>
        <begin position="394"/>
        <end position="431"/>
    </location>
</feature>
<feature type="glycosylation site" description="N-linked (GlcNAc...) asparagine" evidence="2">
    <location>
        <position position="27"/>
    </location>
</feature>
<feature type="glycosylation site" description="N-linked (GlcNAc...) asparagine" evidence="2">
    <location>
        <position position="64"/>
    </location>
</feature>
<feature type="glycosylation site" description="N-linked (GlcNAc...) asparagine" evidence="2">
    <location>
        <position position="85"/>
    </location>
</feature>
<feature type="glycosylation site" description="N-linked (GlcNAc...) asparagine" evidence="2">
    <location>
        <position position="261"/>
    </location>
</feature>
<feature type="glycosylation site" description="N-linked (GlcNAc...) asparagine" evidence="2">
    <location>
        <position position="314"/>
    </location>
</feature>
<feature type="glycosylation site" description="N-linked (GlcNAc...) asparagine" evidence="2">
    <location>
        <position position="433"/>
    </location>
</feature>
<feature type="glycosylation site" description="N-linked (GlcNAc...) asparagine" evidence="2">
    <location>
        <position position="464"/>
    </location>
</feature>
<feature type="disulfide bond" evidence="3">
    <location>
        <begin position="334"/>
        <end position="347"/>
    </location>
</feature>
<feature type="disulfide bond" evidence="3">
    <location>
        <begin position="349"/>
        <end position="358"/>
    </location>
</feature>
<feature type="disulfide bond" evidence="3">
    <location>
        <begin position="398"/>
        <end position="408"/>
    </location>
</feature>
<feature type="disulfide bond" evidence="3">
    <location>
        <begin position="402"/>
        <end position="419"/>
    </location>
</feature>
<feature type="disulfide bond" evidence="3">
    <location>
        <begin position="421"/>
        <end position="430"/>
    </location>
</feature>
<proteinExistence type="inferred from homology"/>
<reference evidence="5" key="1">
    <citation type="journal article" date="2007" name="Nature">
        <title>Evolution of genes and genomes on the Drosophila phylogeny.</title>
        <authorList>
            <consortium name="Drosophila 12 genomes consortium"/>
        </authorList>
    </citation>
    <scope>NUCLEOTIDE SEQUENCE [LARGE SCALE GENOMIC DNA]</scope>
    <source>
        <strain evidence="5">Tucson 15287-2541.00</strain>
    </source>
</reference>
<evidence type="ECO:0000250" key="1">
    <source>
        <dbReference type="UniProtKB" id="Q95RU0"/>
    </source>
</evidence>
<evidence type="ECO:0000255" key="2"/>
<evidence type="ECO:0000255" key="3">
    <source>
        <dbReference type="PROSITE-ProRule" id="PRU00076"/>
    </source>
</evidence>
<evidence type="ECO:0000305" key="4"/>
<evidence type="ECO:0000312" key="5">
    <source>
        <dbReference type="EMBL" id="EDV96429.1"/>
    </source>
</evidence>
<name>CUE_DROGR</name>
<protein>
    <recommendedName>
        <fullName evidence="1">Protein cueball</fullName>
    </recommendedName>
</protein>
<accession>B4IXJ2</accession>
<comment type="function">
    <text evidence="1">Has a role in spermatogenesis and oogenesis.</text>
</comment>
<comment type="subcellular location">
    <subcellularLocation>
        <location evidence="4">Cell membrane</location>
        <topology evidence="4">Single-pass type I membrane protein</topology>
    </subcellularLocation>
</comment>
<comment type="similarity">
    <text evidence="4">Belongs to the cueball family.</text>
</comment>
<organism>
    <name type="scientific">Drosophila grimshawi</name>
    <name type="common">Hawaiian fruit fly</name>
    <name type="synonym">Idiomyia grimshawi</name>
    <dbReference type="NCBI Taxonomy" id="7222"/>
    <lineage>
        <taxon>Eukaryota</taxon>
        <taxon>Metazoa</taxon>
        <taxon>Ecdysozoa</taxon>
        <taxon>Arthropoda</taxon>
        <taxon>Hexapoda</taxon>
        <taxon>Insecta</taxon>
        <taxon>Pterygota</taxon>
        <taxon>Neoptera</taxon>
        <taxon>Endopterygota</taxon>
        <taxon>Diptera</taxon>
        <taxon>Brachycera</taxon>
        <taxon>Muscomorpha</taxon>
        <taxon>Ephydroidea</taxon>
        <taxon>Drosophilidae</taxon>
        <taxon>Drosophila</taxon>
        <taxon>Hawaiian Drosophila</taxon>
    </lineage>
</organism>
<keyword id="KW-1003">Cell membrane</keyword>
<keyword id="KW-0221">Differentiation</keyword>
<keyword id="KW-1015">Disulfide bond</keyword>
<keyword id="KW-0245">EGF-like domain</keyword>
<keyword id="KW-0325">Glycoprotein</keyword>
<keyword id="KW-0472">Membrane</keyword>
<keyword id="KW-0896">Oogenesis</keyword>
<keyword id="KW-1185">Reference proteome</keyword>
<keyword id="KW-0677">Repeat</keyword>
<keyword id="KW-0732">Signal</keyword>
<keyword id="KW-0744">Spermatogenesis</keyword>
<keyword id="KW-0812">Transmembrane</keyword>
<keyword id="KW-1133">Transmembrane helix</keyword>
<dbReference type="EMBL" id="CH916366">
    <property type="protein sequence ID" value="EDV96429.1"/>
    <property type="molecule type" value="Genomic_DNA"/>
</dbReference>
<dbReference type="RefSeq" id="XP_001984081.1">
    <property type="nucleotide sequence ID" value="XM_001984045.1"/>
</dbReference>
<dbReference type="SMR" id="B4IXJ2"/>
<dbReference type="FunCoup" id="B4IXJ2">
    <property type="interactions" value="161"/>
</dbReference>
<dbReference type="STRING" id="7222.B4IXJ2"/>
<dbReference type="GlyCosmos" id="B4IXJ2">
    <property type="glycosylation" value="7 sites, No reported glycans"/>
</dbReference>
<dbReference type="EnsemblMetazoa" id="FBtr0465496">
    <property type="protein sequence ID" value="FBpp0415738"/>
    <property type="gene ID" value="FBgn0122678"/>
</dbReference>
<dbReference type="EnsemblMetazoa" id="XM_032741183.2">
    <property type="protein sequence ID" value="XP_032597074.1"/>
    <property type="gene ID" value="LOC6557685"/>
</dbReference>
<dbReference type="eggNOG" id="KOG1215">
    <property type="taxonomic scope" value="Eukaryota"/>
</dbReference>
<dbReference type="HOGENOM" id="CLU_026602_0_0_1"/>
<dbReference type="InParanoid" id="B4IXJ2"/>
<dbReference type="OMA" id="RCEQNST"/>
<dbReference type="OrthoDB" id="382013at2759"/>
<dbReference type="PhylomeDB" id="B4IXJ2"/>
<dbReference type="Proteomes" id="UP000001070">
    <property type="component" value="Unassembled WGS sequence"/>
</dbReference>
<dbReference type="GO" id="GO:0005886">
    <property type="term" value="C:plasma membrane"/>
    <property type="evidence" value="ECO:0007669"/>
    <property type="project" value="UniProtKB-SubCell"/>
</dbReference>
<dbReference type="GO" id="GO:0042813">
    <property type="term" value="F:Wnt receptor activity"/>
    <property type="evidence" value="ECO:0007669"/>
    <property type="project" value="TreeGrafter"/>
</dbReference>
<dbReference type="GO" id="GO:0017147">
    <property type="term" value="F:Wnt-protein binding"/>
    <property type="evidence" value="ECO:0007669"/>
    <property type="project" value="TreeGrafter"/>
</dbReference>
<dbReference type="GO" id="GO:0048513">
    <property type="term" value="P:animal organ development"/>
    <property type="evidence" value="ECO:0007669"/>
    <property type="project" value="UniProtKB-ARBA"/>
</dbReference>
<dbReference type="GO" id="GO:0060070">
    <property type="term" value="P:canonical Wnt signaling pathway"/>
    <property type="evidence" value="ECO:0007669"/>
    <property type="project" value="TreeGrafter"/>
</dbReference>
<dbReference type="GO" id="GO:0048477">
    <property type="term" value="P:oogenesis"/>
    <property type="evidence" value="ECO:0007669"/>
    <property type="project" value="UniProtKB-KW"/>
</dbReference>
<dbReference type="GO" id="GO:0045938">
    <property type="term" value="P:positive regulation of circadian sleep/wake cycle, sleep"/>
    <property type="evidence" value="ECO:0007669"/>
    <property type="project" value="EnsemblMetazoa"/>
</dbReference>
<dbReference type="GO" id="GO:0007283">
    <property type="term" value="P:spermatogenesis"/>
    <property type="evidence" value="ECO:0007669"/>
    <property type="project" value="UniProtKB-KW"/>
</dbReference>
<dbReference type="GO" id="GO:0048731">
    <property type="term" value="P:system development"/>
    <property type="evidence" value="ECO:0007669"/>
    <property type="project" value="UniProtKB-ARBA"/>
</dbReference>
<dbReference type="GO" id="GO:0070328">
    <property type="term" value="P:triglyceride homeostasis"/>
    <property type="evidence" value="ECO:0007669"/>
    <property type="project" value="EnsemblMetazoa"/>
</dbReference>
<dbReference type="CDD" id="cd00055">
    <property type="entry name" value="EGF_Lam"/>
    <property type="match status" value="1"/>
</dbReference>
<dbReference type="Gene3D" id="2.10.25.10">
    <property type="entry name" value="Laminin"/>
    <property type="match status" value="3"/>
</dbReference>
<dbReference type="Gene3D" id="2.120.10.30">
    <property type="entry name" value="TolB, C-terminal domain"/>
    <property type="match status" value="1"/>
</dbReference>
<dbReference type="InterPro" id="IPR011042">
    <property type="entry name" value="6-blade_b-propeller_TolB-like"/>
</dbReference>
<dbReference type="InterPro" id="IPR050778">
    <property type="entry name" value="Cueball_EGF_LRP_Nidogen"/>
</dbReference>
<dbReference type="InterPro" id="IPR000742">
    <property type="entry name" value="EGF-like_dom"/>
</dbReference>
<dbReference type="InterPro" id="IPR000033">
    <property type="entry name" value="LDLR_classB_rpt"/>
</dbReference>
<dbReference type="InterPro" id="IPR002049">
    <property type="entry name" value="LE_dom"/>
</dbReference>
<dbReference type="PANTHER" id="PTHR46513:SF42">
    <property type="entry name" value="PROTEIN CUEBALL"/>
    <property type="match status" value="1"/>
</dbReference>
<dbReference type="PANTHER" id="PTHR46513">
    <property type="entry name" value="VITELLOGENIN RECEPTOR-LIKE PROTEIN-RELATED-RELATED"/>
    <property type="match status" value="1"/>
</dbReference>
<dbReference type="Pfam" id="PF00058">
    <property type="entry name" value="Ldl_recept_b"/>
    <property type="match status" value="1"/>
</dbReference>
<dbReference type="SMART" id="SM00181">
    <property type="entry name" value="EGF"/>
    <property type="match status" value="3"/>
</dbReference>
<dbReference type="SMART" id="SM00135">
    <property type="entry name" value="LY"/>
    <property type="match status" value="4"/>
</dbReference>
<dbReference type="SUPFAM" id="SSF57196">
    <property type="entry name" value="EGF/Laminin"/>
    <property type="match status" value="2"/>
</dbReference>
<dbReference type="SUPFAM" id="SSF63825">
    <property type="entry name" value="YWTD domain"/>
    <property type="match status" value="1"/>
</dbReference>
<dbReference type="PROSITE" id="PS00022">
    <property type="entry name" value="EGF_1"/>
    <property type="match status" value="3"/>
</dbReference>
<dbReference type="PROSITE" id="PS01186">
    <property type="entry name" value="EGF_2"/>
    <property type="match status" value="1"/>
</dbReference>
<dbReference type="PROSITE" id="PS50026">
    <property type="entry name" value="EGF_3"/>
    <property type="match status" value="2"/>
</dbReference>
<dbReference type="PROSITE" id="PS51120">
    <property type="entry name" value="LDLRB"/>
    <property type="match status" value="4"/>
</dbReference>
<gene>
    <name evidence="1" type="primary">cue</name>
    <name type="ORF">GH15203</name>
</gene>